<organism>
    <name type="scientific">Mus musculus</name>
    <name type="common">Mouse</name>
    <dbReference type="NCBI Taxonomy" id="10090"/>
    <lineage>
        <taxon>Eukaryota</taxon>
        <taxon>Metazoa</taxon>
        <taxon>Chordata</taxon>
        <taxon>Craniata</taxon>
        <taxon>Vertebrata</taxon>
        <taxon>Euteleostomi</taxon>
        <taxon>Mammalia</taxon>
        <taxon>Eutheria</taxon>
        <taxon>Euarchontoglires</taxon>
        <taxon>Glires</taxon>
        <taxon>Rodentia</taxon>
        <taxon>Myomorpha</taxon>
        <taxon>Muroidea</taxon>
        <taxon>Muridae</taxon>
        <taxon>Murinae</taxon>
        <taxon>Mus</taxon>
        <taxon>Mus</taxon>
    </lineage>
</organism>
<keyword id="KW-0966">Cell projection</keyword>
<keyword id="KW-0175">Coiled coil</keyword>
<keyword id="KW-0963">Cytoplasm</keyword>
<keyword id="KW-0206">Cytoskeleton</keyword>
<keyword id="KW-0597">Phosphoprotein</keyword>
<keyword id="KW-1185">Reference proteome</keyword>
<protein>
    <recommendedName>
        <fullName>CTTNBP2 N-terminal-like protein</fullName>
    </recommendedName>
</protein>
<sequence>MNLEKLSKPELLTLFSILEGELEARDLVIEALKAQHRDTFIEERYGKYNISDPLMALQRDFETLKEKNDSEKQPVCTNPLSVLKAVMKQCKNMQERMLSQLAAAESRHRKVILDLEEERQRHAQDTAEGDDVTYMLEKERERLTQQLEFEKSQVKKFEKEQKKLSSQLEEERTRHKQLSSMLVLECRKATSKAAEEGQKAGELSLKLDKEKSRASKLEEELAAERKRGLQTEAQVEKQLSEFDIEREQLRAKLNREENRTRALKEEVESLKKLVKDLEAAQQHRSTSEQGREPVTMSRGTATEPPMRVSAFCQTESVQTERSHGSVITKLTDTGLPGPTTAAYSYAKANGHCDPEIQTTRELTSDSSTENQGPPREKSAVAAQEKPVENGGCPVGTETPVTMPSHLPSSGSSLSPSSTASSSLTSSPCSSPVLTKRLLGSAASSPGYQSSYQVGINQRFHAARHKFQSQADQDQQASGLQSPPSRDLSPTLLDNSAAKQLARNTVTQVLSRFTNQGPIKPVSPNSSPFGTDYRNLASTASPRGDTSHSPTPGKVSSPLSPLSPGIKSPTIPRAERGNPPPIPPKKPGLTPSQSATTPVTKTHSQASSLAATEDLASSCSPSAVVANGKDVEILLPTSS</sequence>
<reference key="1">
    <citation type="journal article" date="2003" name="DNA Res.">
        <title>Prediction of the coding sequences of mouse homologues of KIAA gene: III. The complete nucleotide sequences of 500 mouse KIAA-homologous cDNAs identified by screening of terminal sequences of cDNA clones randomly sampled from size-fractionated libraries.</title>
        <authorList>
            <person name="Okazaki N."/>
            <person name="Kikuno R."/>
            <person name="Ohara R."/>
            <person name="Inamoto S."/>
            <person name="Koseki H."/>
            <person name="Hiraoka S."/>
            <person name="Saga Y."/>
            <person name="Nagase T."/>
            <person name="Ohara O."/>
            <person name="Koga H."/>
        </authorList>
    </citation>
    <scope>NUCLEOTIDE SEQUENCE [LARGE SCALE MRNA]</scope>
    <source>
        <tissue>Embryonic tail</tissue>
    </source>
</reference>
<reference key="2">
    <citation type="journal article" date="2005" name="Science">
        <title>The transcriptional landscape of the mammalian genome.</title>
        <authorList>
            <person name="Carninci P."/>
            <person name="Kasukawa T."/>
            <person name="Katayama S."/>
            <person name="Gough J."/>
            <person name="Frith M.C."/>
            <person name="Maeda N."/>
            <person name="Oyama R."/>
            <person name="Ravasi T."/>
            <person name="Lenhard B."/>
            <person name="Wells C."/>
            <person name="Kodzius R."/>
            <person name="Shimokawa K."/>
            <person name="Bajic V.B."/>
            <person name="Brenner S.E."/>
            <person name="Batalov S."/>
            <person name="Forrest A.R."/>
            <person name="Zavolan M."/>
            <person name="Davis M.J."/>
            <person name="Wilming L.G."/>
            <person name="Aidinis V."/>
            <person name="Allen J.E."/>
            <person name="Ambesi-Impiombato A."/>
            <person name="Apweiler R."/>
            <person name="Aturaliya R.N."/>
            <person name="Bailey T.L."/>
            <person name="Bansal M."/>
            <person name="Baxter L."/>
            <person name="Beisel K.W."/>
            <person name="Bersano T."/>
            <person name="Bono H."/>
            <person name="Chalk A.M."/>
            <person name="Chiu K.P."/>
            <person name="Choudhary V."/>
            <person name="Christoffels A."/>
            <person name="Clutterbuck D.R."/>
            <person name="Crowe M.L."/>
            <person name="Dalla E."/>
            <person name="Dalrymple B.P."/>
            <person name="de Bono B."/>
            <person name="Della Gatta G."/>
            <person name="di Bernardo D."/>
            <person name="Down T."/>
            <person name="Engstrom P."/>
            <person name="Fagiolini M."/>
            <person name="Faulkner G."/>
            <person name="Fletcher C.F."/>
            <person name="Fukushima T."/>
            <person name="Furuno M."/>
            <person name="Futaki S."/>
            <person name="Gariboldi M."/>
            <person name="Georgii-Hemming P."/>
            <person name="Gingeras T.R."/>
            <person name="Gojobori T."/>
            <person name="Green R.E."/>
            <person name="Gustincich S."/>
            <person name="Harbers M."/>
            <person name="Hayashi Y."/>
            <person name="Hensch T.K."/>
            <person name="Hirokawa N."/>
            <person name="Hill D."/>
            <person name="Huminiecki L."/>
            <person name="Iacono M."/>
            <person name="Ikeo K."/>
            <person name="Iwama A."/>
            <person name="Ishikawa T."/>
            <person name="Jakt M."/>
            <person name="Kanapin A."/>
            <person name="Katoh M."/>
            <person name="Kawasawa Y."/>
            <person name="Kelso J."/>
            <person name="Kitamura H."/>
            <person name="Kitano H."/>
            <person name="Kollias G."/>
            <person name="Krishnan S.P."/>
            <person name="Kruger A."/>
            <person name="Kummerfeld S.K."/>
            <person name="Kurochkin I.V."/>
            <person name="Lareau L.F."/>
            <person name="Lazarevic D."/>
            <person name="Lipovich L."/>
            <person name="Liu J."/>
            <person name="Liuni S."/>
            <person name="McWilliam S."/>
            <person name="Madan Babu M."/>
            <person name="Madera M."/>
            <person name="Marchionni L."/>
            <person name="Matsuda H."/>
            <person name="Matsuzawa S."/>
            <person name="Miki H."/>
            <person name="Mignone F."/>
            <person name="Miyake S."/>
            <person name="Morris K."/>
            <person name="Mottagui-Tabar S."/>
            <person name="Mulder N."/>
            <person name="Nakano N."/>
            <person name="Nakauchi H."/>
            <person name="Ng P."/>
            <person name="Nilsson R."/>
            <person name="Nishiguchi S."/>
            <person name="Nishikawa S."/>
            <person name="Nori F."/>
            <person name="Ohara O."/>
            <person name="Okazaki Y."/>
            <person name="Orlando V."/>
            <person name="Pang K.C."/>
            <person name="Pavan W.J."/>
            <person name="Pavesi G."/>
            <person name="Pesole G."/>
            <person name="Petrovsky N."/>
            <person name="Piazza S."/>
            <person name="Reed J."/>
            <person name="Reid J.F."/>
            <person name="Ring B.Z."/>
            <person name="Ringwald M."/>
            <person name="Rost B."/>
            <person name="Ruan Y."/>
            <person name="Salzberg S.L."/>
            <person name="Sandelin A."/>
            <person name="Schneider C."/>
            <person name="Schoenbach C."/>
            <person name="Sekiguchi K."/>
            <person name="Semple C.A."/>
            <person name="Seno S."/>
            <person name="Sessa L."/>
            <person name="Sheng Y."/>
            <person name="Shibata Y."/>
            <person name="Shimada H."/>
            <person name="Shimada K."/>
            <person name="Silva D."/>
            <person name="Sinclair B."/>
            <person name="Sperling S."/>
            <person name="Stupka E."/>
            <person name="Sugiura K."/>
            <person name="Sultana R."/>
            <person name="Takenaka Y."/>
            <person name="Taki K."/>
            <person name="Tammoja K."/>
            <person name="Tan S.L."/>
            <person name="Tang S."/>
            <person name="Taylor M.S."/>
            <person name="Tegner J."/>
            <person name="Teichmann S.A."/>
            <person name="Ueda H.R."/>
            <person name="van Nimwegen E."/>
            <person name="Verardo R."/>
            <person name="Wei C.L."/>
            <person name="Yagi K."/>
            <person name="Yamanishi H."/>
            <person name="Zabarovsky E."/>
            <person name="Zhu S."/>
            <person name="Zimmer A."/>
            <person name="Hide W."/>
            <person name="Bult C."/>
            <person name="Grimmond S.M."/>
            <person name="Teasdale R.D."/>
            <person name="Liu E.T."/>
            <person name="Brusic V."/>
            <person name="Quackenbush J."/>
            <person name="Wahlestedt C."/>
            <person name="Mattick J.S."/>
            <person name="Hume D.A."/>
            <person name="Kai C."/>
            <person name="Sasaki D."/>
            <person name="Tomaru Y."/>
            <person name="Fukuda S."/>
            <person name="Kanamori-Katayama M."/>
            <person name="Suzuki M."/>
            <person name="Aoki J."/>
            <person name="Arakawa T."/>
            <person name="Iida J."/>
            <person name="Imamura K."/>
            <person name="Itoh M."/>
            <person name="Kato T."/>
            <person name="Kawaji H."/>
            <person name="Kawagashira N."/>
            <person name="Kawashima T."/>
            <person name="Kojima M."/>
            <person name="Kondo S."/>
            <person name="Konno H."/>
            <person name="Nakano K."/>
            <person name="Ninomiya N."/>
            <person name="Nishio T."/>
            <person name="Okada M."/>
            <person name="Plessy C."/>
            <person name="Shibata K."/>
            <person name="Shiraki T."/>
            <person name="Suzuki S."/>
            <person name="Tagami M."/>
            <person name="Waki K."/>
            <person name="Watahiki A."/>
            <person name="Okamura-Oho Y."/>
            <person name="Suzuki H."/>
            <person name="Kawai J."/>
            <person name="Hayashizaki Y."/>
        </authorList>
    </citation>
    <scope>NUCLEOTIDE SEQUENCE [LARGE SCALE MRNA]</scope>
    <source>
        <strain>C57BL/6J</strain>
        <tissue>Pituitary</tissue>
        <tissue>Testis</tissue>
    </source>
</reference>
<reference key="3">
    <citation type="journal article" date="2004" name="Genome Res.">
        <title>The status, quality, and expansion of the NIH full-length cDNA project: the Mammalian Gene Collection (MGC).</title>
        <authorList>
            <consortium name="The MGC Project Team"/>
        </authorList>
    </citation>
    <scope>NUCLEOTIDE SEQUENCE [LARGE SCALE MRNA]</scope>
    <source>
        <strain>FVB/N</strain>
        <tissue>Mammary tumor</tissue>
    </source>
</reference>
<reference key="4">
    <citation type="journal article" date="2004" name="Mol. Cell. Proteomics">
        <title>Phosphoproteomic analysis of the developing mouse brain.</title>
        <authorList>
            <person name="Ballif B.A."/>
            <person name="Villen J."/>
            <person name="Beausoleil S.A."/>
            <person name="Schwartz D."/>
            <person name="Gygi S.P."/>
        </authorList>
    </citation>
    <scope>IDENTIFICATION BY MASS SPECTROMETRY [LARGE SCALE ANALYSIS]</scope>
    <source>
        <tissue>Embryonic brain</tissue>
    </source>
</reference>
<reference key="5">
    <citation type="journal article" date="2009" name="Immunity">
        <title>The phagosomal proteome in interferon-gamma-activated macrophages.</title>
        <authorList>
            <person name="Trost M."/>
            <person name="English L."/>
            <person name="Lemieux S."/>
            <person name="Courcelles M."/>
            <person name="Desjardins M."/>
            <person name="Thibault P."/>
        </authorList>
    </citation>
    <scope>PHOSPHORYLATION [LARGE SCALE ANALYSIS] AT SER-481</scope>
    <scope>IDENTIFICATION BY MASS SPECTROMETRY [LARGE SCALE ANALYSIS]</scope>
</reference>
<reference key="6">
    <citation type="journal article" date="2010" name="Cell">
        <title>A tissue-specific atlas of mouse protein phosphorylation and expression.</title>
        <authorList>
            <person name="Huttlin E.L."/>
            <person name="Jedrychowski M.P."/>
            <person name="Elias J.E."/>
            <person name="Goswami T."/>
            <person name="Rad R."/>
            <person name="Beausoleil S.A."/>
            <person name="Villen J."/>
            <person name="Haas W."/>
            <person name="Sowa M.E."/>
            <person name="Gygi S.P."/>
        </authorList>
    </citation>
    <scope>PHOSPHORYLATION [LARGE SCALE ANALYSIS] AT SER-488</scope>
    <scope>IDENTIFICATION BY MASS SPECTROMETRY [LARGE SCALE ANALYSIS]</scope>
    <source>
        <tissue>Brain</tissue>
        <tissue>Heart</tissue>
        <tissue>Kidney</tissue>
        <tissue>Lung</tissue>
        <tissue>Spleen</tissue>
    </source>
</reference>
<reference key="7">
    <citation type="journal article" date="2012" name="Mol. Biol. Cell">
        <title>CTTNBP2, but not CTTNBP2NL, regulates dendritic spinogenesis and synaptic distribution of the striatin-PP2A complex.</title>
        <authorList>
            <person name="Chen Y.K."/>
            <person name="Chen C.Y."/>
            <person name="Hu H.T."/>
            <person name="Hsueh Y.P."/>
        </authorList>
    </citation>
    <scope>INTERACTION WITH CTTN</scope>
    <scope>SUBCELLULAR LOCATION</scope>
</reference>
<comment type="function">
    <text evidence="1 2">Regulates lamellipodial actin dynamics in a CTTN-dependent manner (By similarity). Associates with core striatin-interacting phosphatase and kinase (STRIPAK) complex to form CTTNBP2NL-STRIPAK complexes. STRIPAK complexes have critical roles in protein (de)phosphorylation and are regulators of multiple signaling pathways including Hippo, MAPK, nuclear receptor and cytoskeleton remodeling. Different types of STRIPAK complexes are involved in a variety of biological processes such as cell growth, differentiation, apoptosis, metabolism and immune regulation (By similarity).</text>
</comment>
<comment type="subunit">
    <text evidence="2 5">Interacts with CTTN/cortactin; this interaction may redistribute CTTN to stress fibers (PubMed:23015759). May form homomers. Associates with the core of STRIPAK complexes composed of PP2A catalytic and scaffolding subunits, the striatins (PP2A regulatory subunits), the striatin-associated proteins MOB4, STRIP1 and STRIP2, PDCD10 and members of the STE20 kinases, such as STK24 and STK26 (By similarity).</text>
</comment>
<comment type="subcellular location">
    <subcellularLocation>
        <location evidence="1">Cell projection</location>
        <location evidence="1">Lamellipodium</location>
    </subcellularLocation>
    <subcellularLocation>
        <location evidence="5">Cytoplasm</location>
        <location evidence="5">Cytoskeleton</location>
        <location evidence="5">Stress fiber</location>
    </subcellularLocation>
</comment>
<comment type="tissue specificity">
    <text>Predominantly expressed in skin, also detectable in spleen and lung (at protein level). Very low levels, if any, in brain (at protein level).</text>
</comment>
<comment type="sequence caution" evidence="6">
    <conflict type="erroneous initiation">
        <sequence resource="EMBL-CDS" id="BAC98169"/>
    </conflict>
    <text>Extended N-terminus.</text>
</comment>
<evidence type="ECO:0000250" key="1">
    <source>
        <dbReference type="UniProtKB" id="Q8SX68"/>
    </source>
</evidence>
<evidence type="ECO:0000250" key="2">
    <source>
        <dbReference type="UniProtKB" id="Q9P2B4"/>
    </source>
</evidence>
<evidence type="ECO:0000255" key="3"/>
<evidence type="ECO:0000256" key="4">
    <source>
        <dbReference type="SAM" id="MobiDB-lite"/>
    </source>
</evidence>
<evidence type="ECO:0000269" key="5">
    <source>
    </source>
</evidence>
<evidence type="ECO:0000305" key="6"/>
<evidence type="ECO:0007744" key="7">
    <source>
    </source>
</evidence>
<evidence type="ECO:0007744" key="8">
    <source>
    </source>
</evidence>
<gene>
    <name type="primary">Cttnbp2nl</name>
    <name type="synonym">Kiaa1433</name>
</gene>
<name>CT2NL_MOUSE</name>
<proteinExistence type="evidence at protein level"/>
<dbReference type="EMBL" id="AK129359">
    <property type="protein sequence ID" value="BAC98169.1"/>
    <property type="status" value="ALT_INIT"/>
    <property type="molecule type" value="mRNA"/>
</dbReference>
<dbReference type="EMBL" id="AK029901">
    <property type="protein sequence ID" value="BAC26666.1"/>
    <property type="molecule type" value="mRNA"/>
</dbReference>
<dbReference type="EMBL" id="AK030438">
    <property type="protein sequence ID" value="BAC26964.1"/>
    <property type="molecule type" value="mRNA"/>
</dbReference>
<dbReference type="EMBL" id="BC003236">
    <property type="protein sequence ID" value="AAH03236.1"/>
    <property type="molecule type" value="mRNA"/>
</dbReference>
<dbReference type="EMBL" id="BC006952">
    <property type="protein sequence ID" value="AAH06952.1"/>
    <property type="molecule type" value="mRNA"/>
</dbReference>
<dbReference type="CCDS" id="CCDS17707.1"/>
<dbReference type="RefSeq" id="NP_001156804.1">
    <property type="nucleotide sequence ID" value="NM_001163332.2"/>
</dbReference>
<dbReference type="RefSeq" id="NP_001156805.1">
    <property type="nucleotide sequence ID" value="NM_001163333.2"/>
</dbReference>
<dbReference type="RefSeq" id="NP_001398115.1">
    <property type="nucleotide sequence ID" value="NM_001411186.1"/>
</dbReference>
<dbReference type="RefSeq" id="NP_001398117.1">
    <property type="nucleotide sequence ID" value="NM_001411188.1"/>
</dbReference>
<dbReference type="RefSeq" id="NP_001398118.1">
    <property type="nucleotide sequence ID" value="NM_001411189.1"/>
</dbReference>
<dbReference type="RefSeq" id="NP_001398119.1">
    <property type="nucleotide sequence ID" value="NM_001411190.1"/>
</dbReference>
<dbReference type="RefSeq" id="NP_001398120.1">
    <property type="nucleotide sequence ID" value="NM_001411191.1"/>
</dbReference>
<dbReference type="RefSeq" id="NP_001398121.1">
    <property type="nucleotide sequence ID" value="NM_001411192.1"/>
</dbReference>
<dbReference type="RefSeq" id="NP_001398122.1">
    <property type="nucleotide sequence ID" value="NM_001411193.1"/>
</dbReference>
<dbReference type="RefSeq" id="NP_084525.1">
    <property type="nucleotide sequence ID" value="NM_030249.4"/>
</dbReference>
<dbReference type="RefSeq" id="XP_011238590.1">
    <property type="nucleotide sequence ID" value="XM_011240288.2"/>
</dbReference>
<dbReference type="SMR" id="Q99LJ0"/>
<dbReference type="BioGRID" id="219770">
    <property type="interactions" value="2"/>
</dbReference>
<dbReference type="FunCoup" id="Q99LJ0">
    <property type="interactions" value="866"/>
</dbReference>
<dbReference type="STRING" id="10090.ENSMUSP00000076751"/>
<dbReference type="GlyGen" id="Q99LJ0">
    <property type="glycosylation" value="5 sites, 1 O-linked glycan (3 sites)"/>
</dbReference>
<dbReference type="iPTMnet" id="Q99LJ0"/>
<dbReference type="PhosphoSitePlus" id="Q99LJ0"/>
<dbReference type="SwissPalm" id="Q99LJ0"/>
<dbReference type="jPOST" id="Q99LJ0"/>
<dbReference type="PaxDb" id="10090-ENSMUSP00000076751"/>
<dbReference type="PeptideAtlas" id="Q99LJ0"/>
<dbReference type="ProteomicsDB" id="285385"/>
<dbReference type="Pumba" id="Q99LJ0"/>
<dbReference type="Antibodypedia" id="2021">
    <property type="antibodies" value="103 antibodies from 22 providers"/>
</dbReference>
<dbReference type="DNASU" id="80281"/>
<dbReference type="Ensembl" id="ENSMUST00000077548.12">
    <property type="protein sequence ID" value="ENSMUSP00000076751.6"/>
    <property type="gene ID" value="ENSMUSG00000062127.12"/>
</dbReference>
<dbReference type="Ensembl" id="ENSMUST00000098763.7">
    <property type="protein sequence ID" value="ENSMUSP00000096359.3"/>
    <property type="gene ID" value="ENSMUSG00000062127.12"/>
</dbReference>
<dbReference type="GeneID" id="80281"/>
<dbReference type="KEGG" id="mmu:80281"/>
<dbReference type="UCSC" id="uc008quv.2">
    <property type="organism name" value="mouse"/>
</dbReference>
<dbReference type="AGR" id="MGI:1933137"/>
<dbReference type="CTD" id="55917"/>
<dbReference type="MGI" id="MGI:1933137">
    <property type="gene designation" value="Cttnbp2nl"/>
</dbReference>
<dbReference type="VEuPathDB" id="HostDB:ENSMUSG00000062127"/>
<dbReference type="eggNOG" id="KOG1103">
    <property type="taxonomic scope" value="Eukaryota"/>
</dbReference>
<dbReference type="GeneTree" id="ENSGT00950000182852"/>
<dbReference type="HOGENOM" id="CLU_028813_1_0_1"/>
<dbReference type="InParanoid" id="Q99LJ0"/>
<dbReference type="OMA" id="ANGHFEP"/>
<dbReference type="OrthoDB" id="6021133at2759"/>
<dbReference type="PhylomeDB" id="Q99LJ0"/>
<dbReference type="TreeFam" id="TF325130"/>
<dbReference type="BioGRID-ORCS" id="80281">
    <property type="hits" value="3 hits in 78 CRISPR screens"/>
</dbReference>
<dbReference type="ChiTaRS" id="Cttnbp2nl">
    <property type="organism name" value="mouse"/>
</dbReference>
<dbReference type="PRO" id="PR:Q99LJ0"/>
<dbReference type="Proteomes" id="UP000000589">
    <property type="component" value="Chromosome 3"/>
</dbReference>
<dbReference type="RNAct" id="Q99LJ0">
    <property type="molecule type" value="protein"/>
</dbReference>
<dbReference type="Bgee" id="ENSMUSG00000062127">
    <property type="expression patterns" value="Expressed in endothelial cell of lymphatic vessel and 251 other cell types or tissues"/>
</dbReference>
<dbReference type="ExpressionAtlas" id="Q99LJ0">
    <property type="expression patterns" value="baseline and differential"/>
</dbReference>
<dbReference type="GO" id="GO:0005737">
    <property type="term" value="C:cytoplasm"/>
    <property type="evidence" value="ECO:0007669"/>
    <property type="project" value="UniProtKB-KW"/>
</dbReference>
<dbReference type="GO" id="GO:0090443">
    <property type="term" value="C:FAR/SIN/STRIPAK complex"/>
    <property type="evidence" value="ECO:0000250"/>
    <property type="project" value="UniProtKB"/>
</dbReference>
<dbReference type="GO" id="GO:0030027">
    <property type="term" value="C:lamellipodium"/>
    <property type="evidence" value="ECO:0007669"/>
    <property type="project" value="UniProtKB-SubCell"/>
</dbReference>
<dbReference type="GO" id="GO:0001725">
    <property type="term" value="C:stress fiber"/>
    <property type="evidence" value="ECO:0007669"/>
    <property type="project" value="UniProtKB-SubCell"/>
</dbReference>
<dbReference type="GO" id="GO:0051721">
    <property type="term" value="F:protein phosphatase 2A binding"/>
    <property type="evidence" value="ECO:0000266"/>
    <property type="project" value="MGI"/>
</dbReference>
<dbReference type="GO" id="GO:0034763">
    <property type="term" value="P:negative regulation of transmembrane transport"/>
    <property type="evidence" value="ECO:0000266"/>
    <property type="project" value="MGI"/>
</dbReference>
<dbReference type="InterPro" id="IPR050719">
    <property type="entry name" value="Cortactin-Actin_Reg"/>
</dbReference>
<dbReference type="InterPro" id="IPR019131">
    <property type="entry name" value="Cortactin-binding_p2_N"/>
</dbReference>
<dbReference type="PANTHER" id="PTHR23166:SF9">
    <property type="entry name" value="CTTNBP2 N-TERMINAL-LIKE PROTEIN"/>
    <property type="match status" value="1"/>
</dbReference>
<dbReference type="PANTHER" id="PTHR23166">
    <property type="entry name" value="FILAMIN/GPBP-INTERACTING PROTEIN"/>
    <property type="match status" value="1"/>
</dbReference>
<dbReference type="Pfam" id="PF09727">
    <property type="entry name" value="CortBP2"/>
    <property type="match status" value="1"/>
</dbReference>
<accession>Q99LJ0</accession>
<accession>Q6ZPR0</accession>
<accession>Q8BSV1</accession>
<accession>Q922L8</accession>
<feature type="chain" id="PRO_0000226998" description="CTTNBP2 N-terminal-like protein">
    <location>
        <begin position="1"/>
        <end position="638"/>
    </location>
</feature>
<feature type="region of interest" description="Disordered" evidence="4">
    <location>
        <begin position="280"/>
        <end position="303"/>
    </location>
</feature>
<feature type="region of interest" description="Disordered" evidence="4">
    <location>
        <begin position="360"/>
        <end position="430"/>
    </location>
</feature>
<feature type="region of interest" description="Disordered" evidence="4">
    <location>
        <begin position="463"/>
        <end position="490"/>
    </location>
</feature>
<feature type="region of interest" description="Disordered" evidence="4">
    <location>
        <begin position="514"/>
        <end position="621"/>
    </location>
</feature>
<feature type="coiled-coil region" evidence="3">
    <location>
        <begin position="87"/>
        <end position="284"/>
    </location>
</feature>
<feature type="compositionally biased region" description="Polar residues" evidence="4">
    <location>
        <begin position="360"/>
        <end position="371"/>
    </location>
</feature>
<feature type="compositionally biased region" description="Low complexity" evidence="4">
    <location>
        <begin position="401"/>
        <end position="430"/>
    </location>
</feature>
<feature type="compositionally biased region" description="Low complexity" evidence="4">
    <location>
        <begin position="467"/>
        <end position="477"/>
    </location>
</feature>
<feature type="compositionally biased region" description="Polar residues" evidence="4">
    <location>
        <begin position="514"/>
        <end position="528"/>
    </location>
</feature>
<feature type="compositionally biased region" description="Polar residues" evidence="4">
    <location>
        <begin position="589"/>
        <end position="620"/>
    </location>
</feature>
<feature type="modified residue" description="Phosphoserine" evidence="2">
    <location>
        <position position="285"/>
    </location>
</feature>
<feature type="modified residue" description="Phosphoserine" evidence="7">
    <location>
        <position position="481"/>
    </location>
</feature>
<feature type="modified residue" description="Phosphoserine" evidence="8">
    <location>
        <position position="488"/>
    </location>
</feature>
<feature type="modified residue" description="Phosphoserine" evidence="2">
    <location>
        <position position="522"/>
    </location>
</feature>
<feature type="modified residue" description="Phosphoserine" evidence="2">
    <location>
        <position position="526"/>
    </location>
</feature>
<feature type="modified residue" description="Phosphoserine" evidence="2">
    <location>
        <position position="559"/>
    </location>
</feature>
<feature type="modified residue" description="Phosphoserine" evidence="2">
    <location>
        <position position="562"/>
    </location>
</feature>
<feature type="modified residue" description="Phosphoserine" evidence="2">
    <location>
        <position position="567"/>
    </location>
</feature>
<feature type="modified residue" description="Phosphothreonine" evidence="2">
    <location>
        <position position="569"/>
    </location>
</feature>
<feature type="modified residue" description="Phosphothreonine" evidence="2">
    <location>
        <position position="589"/>
    </location>
</feature>
<feature type="modified residue" description="Phosphoserine" evidence="2">
    <location>
        <position position="591"/>
    </location>
</feature>
<feature type="sequence conflict" description="In Ref. 2; BAC26964." evidence="6" ref="2">
    <original>N</original>
    <variation>D</variation>
    <location>
        <position position="92"/>
    </location>
</feature>